<accession>Q4PF70</accession>
<accession>A0A0D1CYB8</accession>
<evidence type="ECO:0000250" key="1">
    <source>
        <dbReference type="UniProtKB" id="Q06543"/>
    </source>
</evidence>
<evidence type="ECO:0000250" key="2">
    <source>
        <dbReference type="UniProtKB" id="Q9UYR9"/>
    </source>
</evidence>
<evidence type="ECO:0000256" key="3">
    <source>
        <dbReference type="SAM" id="MobiDB-lite"/>
    </source>
</evidence>
<evidence type="ECO:0000305" key="4"/>
<gene>
    <name type="ORF">UMAG_01243</name>
</gene>
<comment type="function">
    <text evidence="1">Small GTPase required for proper nuclear import of RNA polymerase II and III (RNAPII and RNAPIII). May act at an RNAP assembly step prior to nuclear import.</text>
</comment>
<comment type="subunit">
    <text evidence="1">Heterodimers with GPN1 or GPN2. Binds to RNA polymerase II (RNAPII).</text>
</comment>
<comment type="similarity">
    <text evidence="4">Belongs to the GPN-loop GTPase family.</text>
</comment>
<protein>
    <recommendedName>
        <fullName evidence="1">GPN-loop GTPase 3</fullName>
    </recommendedName>
</protein>
<organism>
    <name type="scientific">Mycosarcoma maydis</name>
    <name type="common">Corn smut fungus</name>
    <name type="synonym">Ustilago maydis</name>
    <dbReference type="NCBI Taxonomy" id="5270"/>
    <lineage>
        <taxon>Eukaryota</taxon>
        <taxon>Fungi</taxon>
        <taxon>Dikarya</taxon>
        <taxon>Basidiomycota</taxon>
        <taxon>Ustilaginomycotina</taxon>
        <taxon>Ustilaginomycetes</taxon>
        <taxon>Ustilaginales</taxon>
        <taxon>Ustilaginaceae</taxon>
        <taxon>Mycosarcoma</taxon>
    </lineage>
</organism>
<proteinExistence type="inferred from homology"/>
<sequence>MGRYAVLVSGPAGSGKSTFCSALIAHAQSLGRNVHLFNLDPAAERFEYQPSIDIKELISLEDVMEEMNLGPNGGLIYCFEYLLDNLDWLDDELGQFNDDYIIIDCPGQIELYTHFPIMSRLVNILSSQYHFRICATYLLESQFIDDKTKYFAGVLSAMSAMINLEVPHINLLSKMDLVEKGEIGSEAKRGRKREMERYLDPDPLLLMDEVNSRTNPKFHSLNQALVQLIDDFSMVSFMPLDSTDEDSVGTILSHIDNAVQYGEDEEPKEPKDMDEGDFTAQ</sequence>
<dbReference type="EMBL" id="CM003141">
    <property type="protein sequence ID" value="KIS71343.1"/>
    <property type="molecule type" value="Genomic_DNA"/>
</dbReference>
<dbReference type="RefSeq" id="XP_011387177.1">
    <property type="nucleotide sequence ID" value="XM_011388875.1"/>
</dbReference>
<dbReference type="SMR" id="Q4PF70"/>
<dbReference type="FunCoup" id="Q4PF70">
    <property type="interactions" value="641"/>
</dbReference>
<dbReference type="STRING" id="237631.Q4PF70"/>
<dbReference type="EnsemblFungi" id="KIS71343">
    <property type="protein sequence ID" value="KIS71343"/>
    <property type="gene ID" value="UMAG_01243"/>
</dbReference>
<dbReference type="GeneID" id="23562333"/>
<dbReference type="KEGG" id="uma:UMAG_01243"/>
<dbReference type="VEuPathDB" id="FungiDB:UMAG_01243"/>
<dbReference type="eggNOG" id="KOG1534">
    <property type="taxonomic scope" value="Eukaryota"/>
</dbReference>
<dbReference type="HOGENOM" id="CLU_037460_0_0_1"/>
<dbReference type="InParanoid" id="Q4PF70"/>
<dbReference type="OMA" id="LYTHMTV"/>
<dbReference type="OrthoDB" id="5839at2759"/>
<dbReference type="Proteomes" id="UP000000561">
    <property type="component" value="Chromosome 2"/>
</dbReference>
<dbReference type="GO" id="GO:0005525">
    <property type="term" value="F:GTP binding"/>
    <property type="evidence" value="ECO:0007669"/>
    <property type="project" value="UniProtKB-KW"/>
</dbReference>
<dbReference type="GO" id="GO:0003924">
    <property type="term" value="F:GTPase activity"/>
    <property type="evidence" value="ECO:0000318"/>
    <property type="project" value="GO_Central"/>
</dbReference>
<dbReference type="GO" id="GO:0007064">
    <property type="term" value="P:mitotic sister chromatid cohesion"/>
    <property type="evidence" value="ECO:0007669"/>
    <property type="project" value="EnsemblFungi"/>
</dbReference>
<dbReference type="GO" id="GO:0006606">
    <property type="term" value="P:protein import into nucleus"/>
    <property type="evidence" value="ECO:0007669"/>
    <property type="project" value="EnsemblFungi"/>
</dbReference>
<dbReference type="CDD" id="cd17872">
    <property type="entry name" value="GPN3"/>
    <property type="match status" value="1"/>
</dbReference>
<dbReference type="FunFam" id="3.40.50.300:FF:000552">
    <property type="entry name" value="GPN-loop GTPase 3"/>
    <property type="match status" value="1"/>
</dbReference>
<dbReference type="Gene3D" id="3.40.50.300">
    <property type="entry name" value="P-loop containing nucleotide triphosphate hydrolases"/>
    <property type="match status" value="1"/>
</dbReference>
<dbReference type="InterPro" id="IPR004130">
    <property type="entry name" value="Gpn"/>
</dbReference>
<dbReference type="InterPro" id="IPR030228">
    <property type="entry name" value="Gpn3"/>
</dbReference>
<dbReference type="InterPro" id="IPR027417">
    <property type="entry name" value="P-loop_NTPase"/>
</dbReference>
<dbReference type="PANTHER" id="PTHR21231:SF7">
    <property type="entry name" value="GPN-LOOP GTPASE 3"/>
    <property type="match status" value="1"/>
</dbReference>
<dbReference type="PANTHER" id="PTHR21231">
    <property type="entry name" value="XPA-BINDING PROTEIN 1-RELATED"/>
    <property type="match status" value="1"/>
</dbReference>
<dbReference type="Pfam" id="PF03029">
    <property type="entry name" value="ATP_bind_1"/>
    <property type="match status" value="1"/>
</dbReference>
<dbReference type="SUPFAM" id="SSF52540">
    <property type="entry name" value="P-loop containing nucleoside triphosphate hydrolases"/>
    <property type="match status" value="1"/>
</dbReference>
<reference key="1">
    <citation type="journal article" date="2006" name="Nature">
        <title>Insights from the genome of the biotrophic fungal plant pathogen Ustilago maydis.</title>
        <authorList>
            <person name="Kaemper J."/>
            <person name="Kahmann R."/>
            <person name="Boelker M."/>
            <person name="Ma L.-J."/>
            <person name="Brefort T."/>
            <person name="Saville B.J."/>
            <person name="Banuett F."/>
            <person name="Kronstad J.W."/>
            <person name="Gold S.E."/>
            <person name="Mueller O."/>
            <person name="Perlin M.H."/>
            <person name="Woesten H.A.B."/>
            <person name="de Vries R."/>
            <person name="Ruiz-Herrera J."/>
            <person name="Reynaga-Pena C.G."/>
            <person name="Snetselaar K."/>
            <person name="McCann M."/>
            <person name="Perez-Martin J."/>
            <person name="Feldbruegge M."/>
            <person name="Basse C.W."/>
            <person name="Steinberg G."/>
            <person name="Ibeas J.I."/>
            <person name="Holloman W."/>
            <person name="Guzman P."/>
            <person name="Farman M.L."/>
            <person name="Stajich J.E."/>
            <person name="Sentandreu R."/>
            <person name="Gonzalez-Prieto J.M."/>
            <person name="Kennell J.C."/>
            <person name="Molina L."/>
            <person name="Schirawski J."/>
            <person name="Mendoza-Mendoza A."/>
            <person name="Greilinger D."/>
            <person name="Muench K."/>
            <person name="Roessel N."/>
            <person name="Scherer M."/>
            <person name="Vranes M."/>
            <person name="Ladendorf O."/>
            <person name="Vincon V."/>
            <person name="Fuchs U."/>
            <person name="Sandrock B."/>
            <person name="Meng S."/>
            <person name="Ho E.C.H."/>
            <person name="Cahill M.J."/>
            <person name="Boyce K.J."/>
            <person name="Klose J."/>
            <person name="Klosterman S.J."/>
            <person name="Deelstra H.J."/>
            <person name="Ortiz-Castellanos L."/>
            <person name="Li W."/>
            <person name="Sanchez-Alonso P."/>
            <person name="Schreier P.H."/>
            <person name="Haeuser-Hahn I."/>
            <person name="Vaupel M."/>
            <person name="Koopmann E."/>
            <person name="Friedrich G."/>
            <person name="Voss H."/>
            <person name="Schlueter T."/>
            <person name="Margolis J."/>
            <person name="Platt D."/>
            <person name="Swimmer C."/>
            <person name="Gnirke A."/>
            <person name="Chen F."/>
            <person name="Vysotskaia V."/>
            <person name="Mannhaupt G."/>
            <person name="Gueldener U."/>
            <person name="Muensterkoetter M."/>
            <person name="Haase D."/>
            <person name="Oesterheld M."/>
            <person name="Mewes H.-W."/>
            <person name="Mauceli E.W."/>
            <person name="DeCaprio D."/>
            <person name="Wade C.M."/>
            <person name="Butler J."/>
            <person name="Young S.K."/>
            <person name="Jaffe D.B."/>
            <person name="Calvo S.E."/>
            <person name="Nusbaum C."/>
            <person name="Galagan J.E."/>
            <person name="Birren B.W."/>
        </authorList>
    </citation>
    <scope>NUCLEOTIDE SEQUENCE [LARGE SCALE GENOMIC DNA]</scope>
    <source>
        <strain>DSM 14603 / FGSC 9021 / UM521</strain>
    </source>
</reference>
<reference key="2">
    <citation type="submission" date="2014-09" db="EMBL/GenBank/DDBJ databases">
        <authorList>
            <person name="Gueldener U."/>
            <person name="Muensterkoetter M."/>
            <person name="Walter M.C."/>
            <person name="Mannhaupt G."/>
            <person name="Kahmann R."/>
        </authorList>
    </citation>
    <scope>GENOME REANNOTATION</scope>
    <source>
        <strain>DSM 14603 / FGSC 9021 / UM521</strain>
    </source>
</reference>
<feature type="chain" id="PRO_0000255595" description="GPN-loop GTPase 3">
    <location>
        <begin position="1"/>
        <end position="281"/>
    </location>
</feature>
<feature type="region of interest" description="Disordered" evidence="3">
    <location>
        <begin position="259"/>
        <end position="281"/>
    </location>
</feature>
<feature type="short sequence motif" description="Gly-Pro-Asn (GPN)-loop; involved in dimer interface" evidence="2">
    <location>
        <begin position="70"/>
        <end position="72"/>
    </location>
</feature>
<feature type="binding site" evidence="2">
    <location>
        <begin position="13"/>
        <end position="18"/>
    </location>
    <ligand>
        <name>GTP</name>
        <dbReference type="ChEBI" id="CHEBI:37565"/>
    </ligand>
</feature>
<feature type="binding site" evidence="2">
    <location>
        <begin position="173"/>
        <end position="176"/>
    </location>
    <ligand>
        <name>GTP</name>
        <dbReference type="ChEBI" id="CHEBI:37565"/>
    </ligand>
</feature>
<feature type="site" description="Stabilizes the phosphate intermediate; shared with dimeric partner" evidence="2">
    <location>
        <position position="72"/>
    </location>
</feature>
<keyword id="KW-0342">GTP-binding</keyword>
<keyword id="KW-0378">Hydrolase</keyword>
<keyword id="KW-0547">Nucleotide-binding</keyword>
<keyword id="KW-1185">Reference proteome</keyword>
<name>GPN3_MYCMD</name>